<proteinExistence type="inferred from homology"/>
<evidence type="ECO:0000305" key="1"/>
<dbReference type="EMBL" id="X83413">
    <property type="protein sequence ID" value="CAA58360.1"/>
    <property type="molecule type" value="Genomic_DNA"/>
</dbReference>
<dbReference type="EMBL" id="M68963">
    <property type="protein sequence ID" value="AAA65576.1"/>
    <property type="molecule type" value="Genomic_DNA"/>
</dbReference>
<dbReference type="PIR" id="D36769">
    <property type="entry name" value="D36769"/>
</dbReference>
<dbReference type="RefSeq" id="NP_042961.1">
    <property type="nucleotide sequence ID" value="NC_001664.2"/>
</dbReference>
<dbReference type="SMR" id="P24445"/>
<dbReference type="DNASU" id="1487949"/>
<dbReference type="GeneID" id="1487949"/>
<dbReference type="KEGG" id="vg:1487949"/>
<dbReference type="Proteomes" id="UP000009295">
    <property type="component" value="Segment"/>
</dbReference>
<dbReference type="InterPro" id="IPR022614">
    <property type="entry name" value="Herpesvirus_UL96"/>
</dbReference>
<dbReference type="Pfam" id="PF10867">
    <property type="entry name" value="DUF2664"/>
    <property type="match status" value="1"/>
</dbReference>
<reference key="1">
    <citation type="journal article" date="1990" name="J. Virol.">
        <title>Human herpesvirus 6 is closely related to human cytomegalovirus.</title>
        <authorList>
            <person name="Lawrence G.L."/>
            <person name="Chee M."/>
            <person name="Craxton M.A."/>
            <person name="Gompels U.A."/>
            <person name="Honess R.W."/>
            <person name="Barrell B.G."/>
        </authorList>
    </citation>
    <scope>NUCLEOTIDE SEQUENCE [GENOMIC DNA]</scope>
</reference>
<reference key="2">
    <citation type="journal article" date="1995" name="Virology">
        <title>The DNA sequence of human herpesvirus-6: structure, coding content, and genome evolution.</title>
        <authorList>
            <person name="Gompels U.A."/>
            <person name="Nicholas J."/>
            <person name="Lawrence G.L."/>
            <person name="Jones M."/>
            <person name="Thomson B.J."/>
            <person name="Martin M.E.D."/>
            <person name="Efstathiou S."/>
            <person name="Craxton M.A."/>
            <person name="Macaulay H.A."/>
        </authorList>
    </citation>
    <scope>NUCLEOTIDE SEQUENCE [LARGE SCALE GENOMIC DNA]</scope>
</reference>
<organism>
    <name type="scientific">Human herpesvirus 6A (strain Uganda-1102)</name>
    <name type="common">HHV-6 variant A</name>
    <name type="synonym">Human B lymphotropic virus</name>
    <dbReference type="NCBI Taxonomy" id="10370"/>
    <lineage>
        <taxon>Viruses</taxon>
        <taxon>Duplodnaviria</taxon>
        <taxon>Heunggongvirae</taxon>
        <taxon>Peploviricota</taxon>
        <taxon>Herviviricetes</taxon>
        <taxon>Herpesvirales</taxon>
        <taxon>Orthoherpesviridae</taxon>
        <taxon>Betaherpesvirinae</taxon>
        <taxon>Roseolovirus</taxon>
        <taxon>Roseolovirus humanbeta6a</taxon>
        <taxon>Human betaherpesvirus 6A</taxon>
    </lineage>
</organism>
<organismHost>
    <name type="scientific">Homo sapiens</name>
    <name type="common">Human</name>
    <dbReference type="NCBI Taxonomy" id="9606"/>
</organismHost>
<protein>
    <recommendedName>
        <fullName>Protein U68</fullName>
    </recommendedName>
</protein>
<gene>
    <name type="primary">U68</name>
    <name type="synonym">14R</name>
</gene>
<name>UL96_HHV6U</name>
<sequence length="114" mass="13074">MSLKDYLRQSISKDLEVRHRDSLKIRLGERHPLSVHQHMIAARQIIKSDNAEQQHVISSLSGFLDKQKSFLRVQQKALKQLEKLDVDEIIDTAAEVKAVSNDIKETLITSTELE</sequence>
<feature type="chain" id="PRO_0000116249" description="Protein U68">
    <location>
        <begin position="1"/>
        <end position="114"/>
    </location>
</feature>
<accession>P24445</accession>
<keyword id="KW-1185">Reference proteome</keyword>
<comment type="similarity">
    <text evidence="1">Belongs to the herpesviridae UL96 family.</text>
</comment>